<protein>
    <recommendedName>
        <fullName evidence="1">Large-conductance mechanosensitive channel</fullName>
    </recommendedName>
</protein>
<feature type="chain" id="PRO_1000191348" description="Large-conductance mechanosensitive channel">
    <location>
        <begin position="1"/>
        <end position="140"/>
    </location>
</feature>
<feature type="transmembrane region" description="Helical" evidence="1">
    <location>
        <begin position="9"/>
        <end position="29"/>
    </location>
</feature>
<feature type="transmembrane region" description="Helical" evidence="1">
    <location>
        <begin position="86"/>
        <end position="106"/>
    </location>
</feature>
<evidence type="ECO:0000255" key="1">
    <source>
        <dbReference type="HAMAP-Rule" id="MF_00115"/>
    </source>
</evidence>
<name>MSCL_ANAD2</name>
<gene>
    <name evidence="1" type="primary">mscL</name>
    <name type="ordered locus">A2cp1_3746</name>
</gene>
<proteinExistence type="inferred from homology"/>
<organism>
    <name type="scientific">Anaeromyxobacter dehalogenans (strain 2CP-1 / ATCC BAA-258)</name>
    <dbReference type="NCBI Taxonomy" id="455488"/>
    <lineage>
        <taxon>Bacteria</taxon>
        <taxon>Pseudomonadati</taxon>
        <taxon>Myxococcota</taxon>
        <taxon>Myxococcia</taxon>
        <taxon>Myxococcales</taxon>
        <taxon>Cystobacterineae</taxon>
        <taxon>Anaeromyxobacteraceae</taxon>
        <taxon>Anaeromyxobacter</taxon>
    </lineage>
</organism>
<keyword id="KW-0997">Cell inner membrane</keyword>
<keyword id="KW-1003">Cell membrane</keyword>
<keyword id="KW-0407">Ion channel</keyword>
<keyword id="KW-0406">Ion transport</keyword>
<keyword id="KW-0472">Membrane</keyword>
<keyword id="KW-0812">Transmembrane</keyword>
<keyword id="KW-1133">Transmembrane helix</keyword>
<keyword id="KW-0813">Transport</keyword>
<reference key="1">
    <citation type="submission" date="2009-01" db="EMBL/GenBank/DDBJ databases">
        <title>Complete sequence of Anaeromyxobacter dehalogenans 2CP-1.</title>
        <authorList>
            <person name="Lucas S."/>
            <person name="Copeland A."/>
            <person name="Lapidus A."/>
            <person name="Glavina del Rio T."/>
            <person name="Dalin E."/>
            <person name="Tice H."/>
            <person name="Bruce D."/>
            <person name="Goodwin L."/>
            <person name="Pitluck S."/>
            <person name="Saunders E."/>
            <person name="Brettin T."/>
            <person name="Detter J.C."/>
            <person name="Han C."/>
            <person name="Larimer F."/>
            <person name="Land M."/>
            <person name="Hauser L."/>
            <person name="Kyrpides N."/>
            <person name="Ovchinnikova G."/>
            <person name="Beliaev A.S."/>
            <person name="Richardson P."/>
        </authorList>
    </citation>
    <scope>NUCLEOTIDE SEQUENCE [LARGE SCALE GENOMIC DNA]</scope>
    <source>
        <strain>2CP-1 / ATCC BAA-258</strain>
    </source>
</reference>
<comment type="function">
    <text evidence="1">Channel that opens in response to stretch forces in the membrane lipid bilayer. May participate in the regulation of osmotic pressure changes within the cell.</text>
</comment>
<comment type="subunit">
    <text evidence="1">Homopentamer.</text>
</comment>
<comment type="subcellular location">
    <subcellularLocation>
        <location evidence="1">Cell inner membrane</location>
        <topology evidence="1">Multi-pass membrane protein</topology>
    </subcellularLocation>
</comment>
<comment type="similarity">
    <text evidence="1">Belongs to the MscL family.</text>
</comment>
<sequence>MSFASEFKAFALKGNVVDLAVGVIIGAAFGKIVDSIVNDLVMPVVGAIFGGFDFKDYFVALKEIPPGVPHALDAVKKAGVPVFAYGSFLTIVLNFLILAFIIFLMVKQFNRMKRAEPAPAPAAPPEQVVLLREIRDALRR</sequence>
<dbReference type="EMBL" id="CP001359">
    <property type="protein sequence ID" value="ACL67072.1"/>
    <property type="molecule type" value="Genomic_DNA"/>
</dbReference>
<dbReference type="RefSeq" id="WP_015934835.1">
    <property type="nucleotide sequence ID" value="NC_011891.1"/>
</dbReference>
<dbReference type="KEGG" id="acp:A2cp1_3746"/>
<dbReference type="HOGENOM" id="CLU_095787_0_1_7"/>
<dbReference type="Proteomes" id="UP000007089">
    <property type="component" value="Chromosome"/>
</dbReference>
<dbReference type="GO" id="GO:0005886">
    <property type="term" value="C:plasma membrane"/>
    <property type="evidence" value="ECO:0007669"/>
    <property type="project" value="UniProtKB-SubCell"/>
</dbReference>
<dbReference type="GO" id="GO:0008381">
    <property type="term" value="F:mechanosensitive monoatomic ion channel activity"/>
    <property type="evidence" value="ECO:0007669"/>
    <property type="project" value="UniProtKB-UniRule"/>
</dbReference>
<dbReference type="Gene3D" id="1.10.1200.120">
    <property type="entry name" value="Large-conductance mechanosensitive channel, MscL, domain 1"/>
    <property type="match status" value="1"/>
</dbReference>
<dbReference type="HAMAP" id="MF_00115">
    <property type="entry name" value="MscL"/>
    <property type="match status" value="1"/>
</dbReference>
<dbReference type="InterPro" id="IPR019823">
    <property type="entry name" value="Mechanosensitive_channel_CS"/>
</dbReference>
<dbReference type="InterPro" id="IPR001185">
    <property type="entry name" value="MS_channel"/>
</dbReference>
<dbReference type="InterPro" id="IPR037673">
    <property type="entry name" value="MSC/AndL"/>
</dbReference>
<dbReference type="InterPro" id="IPR036019">
    <property type="entry name" value="MscL_channel"/>
</dbReference>
<dbReference type="NCBIfam" id="TIGR00220">
    <property type="entry name" value="mscL"/>
    <property type="match status" value="1"/>
</dbReference>
<dbReference type="NCBIfam" id="NF001843">
    <property type="entry name" value="PRK00567.1-4"/>
    <property type="match status" value="1"/>
</dbReference>
<dbReference type="NCBIfam" id="NF010557">
    <property type="entry name" value="PRK13952.1"/>
    <property type="match status" value="1"/>
</dbReference>
<dbReference type="PANTHER" id="PTHR30266:SF2">
    <property type="entry name" value="LARGE-CONDUCTANCE MECHANOSENSITIVE CHANNEL"/>
    <property type="match status" value="1"/>
</dbReference>
<dbReference type="PANTHER" id="PTHR30266">
    <property type="entry name" value="MECHANOSENSITIVE CHANNEL MSCL"/>
    <property type="match status" value="1"/>
</dbReference>
<dbReference type="Pfam" id="PF01741">
    <property type="entry name" value="MscL"/>
    <property type="match status" value="1"/>
</dbReference>
<dbReference type="PRINTS" id="PR01264">
    <property type="entry name" value="MECHCHANNEL"/>
</dbReference>
<dbReference type="SUPFAM" id="SSF81330">
    <property type="entry name" value="Gated mechanosensitive channel"/>
    <property type="match status" value="1"/>
</dbReference>
<dbReference type="PROSITE" id="PS01327">
    <property type="entry name" value="MSCL"/>
    <property type="match status" value="1"/>
</dbReference>
<accession>B8J6V0</accession>